<dbReference type="EMBL" id="AY644400">
    <property type="protein sequence ID" value="AAT77775.1"/>
    <property type="molecule type" value="mRNA"/>
</dbReference>
<dbReference type="EMBL" id="BC097903">
    <property type="protein sequence ID" value="AAH97903.1"/>
    <property type="molecule type" value="mRNA"/>
</dbReference>
<dbReference type="RefSeq" id="NP_001086415.1">
    <property type="nucleotide sequence ID" value="NM_001092946.1"/>
</dbReference>
<dbReference type="SMR" id="Q4V7H8"/>
<dbReference type="BioGRID" id="103011">
    <property type="interactions" value="3"/>
</dbReference>
<dbReference type="DNASU" id="444883"/>
<dbReference type="GeneID" id="444883"/>
<dbReference type="KEGG" id="xla:444883"/>
<dbReference type="AGR" id="Xenbase:XB-GENE-5865093"/>
<dbReference type="CTD" id="444883"/>
<dbReference type="Xenbase" id="XB-GENE-5865093">
    <property type="gene designation" value="cdca9.S"/>
</dbReference>
<dbReference type="OrthoDB" id="6360905at2759"/>
<dbReference type="CD-CODE" id="A12AD357">
    <property type="entry name" value="Synthetic Condensate 000347"/>
</dbReference>
<dbReference type="Proteomes" id="UP000186698">
    <property type="component" value="Chromosome 4S"/>
</dbReference>
<dbReference type="Bgee" id="444883">
    <property type="expression patterns" value="Expressed in egg cell and 8 other cell types or tissues"/>
</dbReference>
<dbReference type="GO" id="GO:0005694">
    <property type="term" value="C:chromosome"/>
    <property type="evidence" value="ECO:0000314"/>
    <property type="project" value="UniProtKB"/>
</dbReference>
<dbReference type="GO" id="GO:0032133">
    <property type="term" value="C:chromosome passenger complex"/>
    <property type="evidence" value="ECO:0000353"/>
    <property type="project" value="UniProtKB"/>
</dbReference>
<dbReference type="GO" id="GO:0000775">
    <property type="term" value="C:chromosome, centromeric region"/>
    <property type="evidence" value="ECO:0000314"/>
    <property type="project" value="UniProtKB"/>
</dbReference>
<dbReference type="GO" id="GO:0005737">
    <property type="term" value="C:cytoplasm"/>
    <property type="evidence" value="ECO:0007669"/>
    <property type="project" value="UniProtKB-KW"/>
</dbReference>
<dbReference type="GO" id="GO:0005634">
    <property type="term" value="C:nucleus"/>
    <property type="evidence" value="ECO:0007669"/>
    <property type="project" value="UniProtKB-SubCell"/>
</dbReference>
<dbReference type="GO" id="GO:0051233">
    <property type="term" value="C:spindle midzone"/>
    <property type="evidence" value="ECO:0000318"/>
    <property type="project" value="GO_Central"/>
</dbReference>
<dbReference type="GO" id="GO:0051301">
    <property type="term" value="P:cell division"/>
    <property type="evidence" value="ECO:0007669"/>
    <property type="project" value="UniProtKB-KW"/>
</dbReference>
<dbReference type="GO" id="GO:0000070">
    <property type="term" value="P:mitotic sister chromatid segregation"/>
    <property type="evidence" value="ECO:0000318"/>
    <property type="project" value="GO_Central"/>
</dbReference>
<dbReference type="GO" id="GO:0051225">
    <property type="term" value="P:spindle assembly"/>
    <property type="evidence" value="ECO:0000315"/>
    <property type="project" value="UniProtKB"/>
</dbReference>
<dbReference type="Gene3D" id="6.10.140.560">
    <property type="match status" value="1"/>
</dbReference>
<dbReference type="Gene3D" id="6.10.250.1900">
    <property type="match status" value="1"/>
</dbReference>
<dbReference type="InterPro" id="IPR046466">
    <property type="entry name" value="Borealin_C"/>
</dbReference>
<dbReference type="InterPro" id="IPR018851">
    <property type="entry name" value="Borealin_N"/>
</dbReference>
<dbReference type="InterPro" id="IPR018867">
    <property type="entry name" value="Cell_div_borealin"/>
</dbReference>
<dbReference type="PANTHER" id="PTHR16040">
    <property type="entry name" value="AUSTRALIN, ISOFORM A-RELATED"/>
    <property type="match status" value="1"/>
</dbReference>
<dbReference type="PANTHER" id="PTHR16040:SF5">
    <property type="entry name" value="BOREALIN-2-RELATED"/>
    <property type="match status" value="1"/>
</dbReference>
<dbReference type="Pfam" id="PF10512">
    <property type="entry name" value="Borealin"/>
    <property type="match status" value="1"/>
</dbReference>
<dbReference type="Pfam" id="PF10444">
    <property type="entry name" value="Nbl1_Borealin_N"/>
    <property type="match status" value="1"/>
</dbReference>
<organism>
    <name type="scientific">Xenopus laevis</name>
    <name type="common">African clawed frog</name>
    <dbReference type="NCBI Taxonomy" id="8355"/>
    <lineage>
        <taxon>Eukaryota</taxon>
        <taxon>Metazoa</taxon>
        <taxon>Chordata</taxon>
        <taxon>Craniata</taxon>
        <taxon>Vertebrata</taxon>
        <taxon>Euteleostomi</taxon>
        <taxon>Amphibia</taxon>
        <taxon>Batrachia</taxon>
        <taxon>Anura</taxon>
        <taxon>Pipoidea</taxon>
        <taxon>Pipidae</taxon>
        <taxon>Xenopodinae</taxon>
        <taxon>Xenopus</taxon>
        <taxon>Xenopus</taxon>
    </lineage>
</organism>
<keyword id="KW-0131">Cell cycle</keyword>
<keyword id="KW-0132">Cell division</keyword>
<keyword id="KW-0137">Centromere</keyword>
<keyword id="KW-0158">Chromosome</keyword>
<keyword id="KW-0159">Chromosome partition</keyword>
<keyword id="KW-0963">Cytoplasm</keyword>
<keyword id="KW-0206">Cytoskeleton</keyword>
<keyword id="KW-0498">Mitosis</keyword>
<keyword id="KW-0539">Nucleus</keyword>
<keyword id="KW-1185">Reference proteome</keyword>
<comment type="function">
    <text evidence="2 3">Component of the chromosomal passenger complex (CPC), a complex that acts as a key regulator of mitosis. The CPC complex has essential functions at the centromere in ensuring correct chromosome alignment and segregation and is required for chromatin-induced microtubule stabilization and spindle assembly. Contributes to CPC function by facilitating loading of the CPC onto chromosomes.</text>
</comment>
<comment type="subunit">
    <text evidence="2 3">Component of the CPC at least composed of survivin/birc5, incenp, cdca8/borealin and/or cdca9/dasra-A, and aurkb/aurora-B. Interacts with incenp (via N-terminus).</text>
</comment>
<comment type="subcellular location">
    <subcellularLocation>
        <location evidence="2">Nucleus</location>
    </subcellularLocation>
    <subcellularLocation>
        <location evidence="2">Chromosome</location>
        <location evidence="2">Centromere</location>
    </subcellularLocation>
    <subcellularLocation>
        <location evidence="2">Cytoplasm</location>
        <location evidence="2">Cytoskeleton</location>
        <location evidence="2">Spindle</location>
    </subcellularLocation>
    <text>Localizes on chromosome arms and inner centromeres from prophase through metaphase and then transferring to the spindle midzone and midbody from anaphase through cytokinesis.</text>
</comment>
<comment type="miscellaneous">
    <text>Was named 'Dasra' in reference to the Hindu mythological deity Dasra, who acts as a harbinger of the dawn.</text>
</comment>
<comment type="similarity">
    <text evidence="4">Belongs to the borealin family.</text>
</comment>
<sequence>MPPKRNRNRLGTRGEGSGDSGVGMFERNDAVQEHKKEKIRLFMQDFVQQGKDRLAELKKDLESLSTTADKALEVELLKMPLAIRHMKVQDYLSLMGGDKSAVAAAAVKLDCSVDELSEPKLVRKNSKKVKVTTNVEYQDDVRTKVMTTSTKNRTVQKVPKSKSMLSLTGKNGKKTTALTRSVSATPLDKASKKLLVTNSSSKPAQRSSRTAMTPLTRSARSDTMFTFGDGAFLDEGVPFVKIPLADGKTVFSAGDDLDSLNVELLRGDTVQHIHNLVGQLTSLCAKASIQHHGNTL</sequence>
<name>BORE2_XENLA</name>
<protein>
    <recommendedName>
        <fullName>Borealin-2</fullName>
    </recommendedName>
    <alternativeName>
        <fullName>Cell division cycle-associated protein 8.2</fullName>
    </alternativeName>
    <alternativeName>
        <fullName>Cell division cycle-associated protein 9</fullName>
    </alternativeName>
    <alternativeName>
        <fullName>Dasra-A</fullName>
        <shortName>DasraA</shortName>
        <shortName>xDasraA</shortName>
    </alternativeName>
</protein>
<proteinExistence type="evidence at protein level"/>
<reference key="1">
    <citation type="journal article" date="2004" name="Cell">
        <title>The chromosomal passenger complex is required for chromatin-induced microtubule stabilization and spindle assembly.</title>
        <authorList>
            <person name="Sampath S.C."/>
            <person name="Ohi R."/>
            <person name="Leismann O."/>
            <person name="Salic A."/>
            <person name="Pozniakovski A."/>
            <person name="Funabiki H."/>
        </authorList>
    </citation>
    <scope>NUCLEOTIDE SEQUENCE [MRNA]</scope>
    <scope>FUNCTION</scope>
    <scope>SUBCELLULAR LOCATION</scope>
    <scope>IDENTIFICATION IN A COMPLEX WITH BIRC5.1; INCENP AND AURKB</scope>
    <scope>IDENTIFICATION IN A COMPLEX WITH CDCA8</scope>
    <source>
        <tissue>Egg</tissue>
    </source>
</reference>
<reference key="2">
    <citation type="submission" date="2005-06" db="EMBL/GenBank/DDBJ databases">
        <authorList>
            <consortium name="NIH - Xenopus Gene Collection (XGC) project"/>
        </authorList>
    </citation>
    <scope>NUCLEOTIDE SEQUENCE [LARGE SCALE MRNA]</scope>
    <source>
        <tissue>Egg</tissue>
    </source>
</reference>
<reference key="3">
    <citation type="journal article" date="2007" name="Dev. Cell">
        <title>Chromosomal enrichment and activation of the aurora B pathway are coupled to spatially regulate spindle assembly.</title>
        <authorList>
            <person name="Kelly A.E."/>
            <person name="Sampath S.C."/>
            <person name="Maniar T.A."/>
            <person name="Woo E.M."/>
            <person name="Chait B.T."/>
            <person name="Funabiki H."/>
        </authorList>
    </citation>
    <scope>FUNCTION</scope>
    <scope>INTERACTION WITH INCENP</scope>
    <scope>IDENTIFICATION IN A COMPLEX WITH AURKB; INCENP; CDCA8; BIRC5.1 AND BIRC5.2</scope>
</reference>
<feature type="chain" id="PRO_0000247080" description="Borealin-2">
    <location>
        <begin position="1"/>
        <end position="296"/>
    </location>
</feature>
<feature type="region of interest" description="Disordered" evidence="1">
    <location>
        <begin position="1"/>
        <end position="24"/>
    </location>
</feature>
<feature type="compositionally biased region" description="Basic residues" evidence="1">
    <location>
        <begin position="1"/>
        <end position="10"/>
    </location>
</feature>
<feature type="sequence conflict" description="In Ref. 1; AAT77775." evidence="4" ref="1">
    <original>T</original>
    <variation>A</variation>
    <location>
        <position position="150"/>
    </location>
</feature>
<feature type="sequence conflict" description="In Ref. 1; AAT77775." evidence="4" ref="1">
    <original>T</original>
    <variation>I</variation>
    <location>
        <position position="210"/>
    </location>
</feature>
<evidence type="ECO:0000256" key="1">
    <source>
        <dbReference type="SAM" id="MobiDB-lite"/>
    </source>
</evidence>
<evidence type="ECO:0000269" key="2">
    <source>
    </source>
</evidence>
<evidence type="ECO:0000269" key="3">
    <source>
    </source>
</evidence>
<evidence type="ECO:0000305" key="4"/>
<gene>
    <name type="primary">cdca9</name>
    <name type="synonym">cdca8.2</name>
</gene>
<accession>Q4V7H8</accession>
<accession>Q693P3</accession>